<gene>
    <name evidence="1" type="primary">fau-1</name>
    <name type="ordered locus">Igni_0761</name>
</gene>
<reference key="1">
    <citation type="journal article" date="2008" name="Genome Biol.">
        <title>A genomic analysis of the archaeal system Ignicoccus hospitalis-Nanoarchaeum equitans.</title>
        <authorList>
            <person name="Podar M."/>
            <person name="Anderson I."/>
            <person name="Makarova K.S."/>
            <person name="Elkins J.G."/>
            <person name="Ivanova N."/>
            <person name="Wall M.A."/>
            <person name="Lykidis A."/>
            <person name="Mavromatis K."/>
            <person name="Sun H."/>
            <person name="Hudson M.E."/>
            <person name="Chen W."/>
            <person name="Deciu C."/>
            <person name="Hutchison D."/>
            <person name="Eads J.R."/>
            <person name="Anderson A."/>
            <person name="Fernandes F."/>
            <person name="Szeto E."/>
            <person name="Lapidus A."/>
            <person name="Kyrpides N.C."/>
            <person name="Saier M.H. Jr."/>
            <person name="Richardson P.M."/>
            <person name="Rachel R."/>
            <person name="Huber H."/>
            <person name="Eisen J.A."/>
            <person name="Koonin E.V."/>
            <person name="Keller M."/>
            <person name="Stetter K.O."/>
        </authorList>
    </citation>
    <scope>NUCLEOTIDE SEQUENCE [LARGE SCALE GENOMIC DNA]</scope>
    <source>
        <strain>KIN4/I / DSM 18386 / JCM 14125</strain>
    </source>
</reference>
<evidence type="ECO:0000255" key="1">
    <source>
        <dbReference type="HAMAP-Rule" id="MF_01910"/>
    </source>
</evidence>
<proteinExistence type="inferred from homology"/>
<accession>A8AAJ1</accession>
<keyword id="KW-0255">Endonuclease</keyword>
<keyword id="KW-0378">Hydrolase</keyword>
<keyword id="KW-0540">Nuclease</keyword>
<keyword id="KW-1185">Reference proteome</keyword>
<keyword id="KW-0694">RNA-binding</keyword>
<keyword id="KW-0698">rRNA processing</keyword>
<comment type="function">
    <text evidence="1">Probable RNase involved in rRNA stability through maturation and/or degradation of precursor rRNAs. Binds to RNA in loop regions with AU-rich sequences.</text>
</comment>
<comment type="similarity">
    <text evidence="1">Belongs to the FAU-1 family.</text>
</comment>
<dbReference type="EC" id="3.1.26.-" evidence="1"/>
<dbReference type="EMBL" id="CP000816">
    <property type="protein sequence ID" value="ABU81943.1"/>
    <property type="molecule type" value="Genomic_DNA"/>
</dbReference>
<dbReference type="RefSeq" id="WP_012122907.1">
    <property type="nucleotide sequence ID" value="NC_009776.1"/>
</dbReference>
<dbReference type="SMR" id="A8AAJ1"/>
<dbReference type="STRING" id="453591.Igni_0761"/>
<dbReference type="GeneID" id="5562825"/>
<dbReference type="KEGG" id="iho:Igni_0761"/>
<dbReference type="eggNOG" id="arCOG04307">
    <property type="taxonomic scope" value="Archaea"/>
</dbReference>
<dbReference type="HOGENOM" id="CLU_044303_0_0_2"/>
<dbReference type="OrthoDB" id="84798at2157"/>
<dbReference type="PhylomeDB" id="A8AAJ1"/>
<dbReference type="Proteomes" id="UP000000262">
    <property type="component" value="Chromosome"/>
</dbReference>
<dbReference type="GO" id="GO:0035925">
    <property type="term" value="F:mRNA 3'-UTR AU-rich region binding"/>
    <property type="evidence" value="ECO:0007669"/>
    <property type="project" value="UniProtKB-UniRule"/>
</dbReference>
<dbReference type="GO" id="GO:0016891">
    <property type="term" value="F:RNA endonuclease activity, producing 5'-phosphomonoesters"/>
    <property type="evidence" value="ECO:0007669"/>
    <property type="project" value="UniProtKB-UniRule"/>
</dbReference>
<dbReference type="GO" id="GO:0006364">
    <property type="term" value="P:rRNA processing"/>
    <property type="evidence" value="ECO:0007669"/>
    <property type="project" value="UniProtKB-UniRule"/>
</dbReference>
<dbReference type="Gene3D" id="2.40.380.10">
    <property type="entry name" value="FomD-like"/>
    <property type="match status" value="1"/>
</dbReference>
<dbReference type="HAMAP" id="MF_01910">
    <property type="entry name" value="RNA_binding_AU_1"/>
    <property type="match status" value="1"/>
</dbReference>
<dbReference type="InterPro" id="IPR007295">
    <property type="entry name" value="DUF402"/>
</dbReference>
<dbReference type="InterPro" id="IPR035930">
    <property type="entry name" value="FomD-like_sf"/>
</dbReference>
<dbReference type="InterPro" id="IPR050212">
    <property type="entry name" value="Ntdp-like"/>
</dbReference>
<dbReference type="InterPro" id="IPR016730">
    <property type="entry name" value="RNA-bd_FAU-1"/>
</dbReference>
<dbReference type="PANTHER" id="PTHR39159">
    <property type="match status" value="1"/>
</dbReference>
<dbReference type="PANTHER" id="PTHR39159:SF1">
    <property type="entry name" value="UPF0374 PROTEIN YGAC"/>
    <property type="match status" value="1"/>
</dbReference>
<dbReference type="Pfam" id="PF04167">
    <property type="entry name" value="DUF402"/>
    <property type="match status" value="1"/>
</dbReference>
<dbReference type="SUPFAM" id="SSF159234">
    <property type="entry name" value="FomD-like"/>
    <property type="match status" value="1"/>
</dbReference>
<feature type="chain" id="PRO_0000334199" description="Probable ribonuclease FAU-1">
    <location>
        <begin position="1"/>
        <end position="469"/>
    </location>
</feature>
<sequence>MEKPRVRVRGIYATAVAKVLLDEGLELSDLSKKLKERIGHEGSPEPPHVTVKQSDDNPDQLVIIGFPEETDKVIQTLRKSMPYSVHHLARPNLHSAYVVEVDEECRTKLGEEEVRVKAKECYDGKKLIAEVVRSRVFPTDKLVMEEGFRVIGLYAELVIGRGSGVTFSKHITDLETKMLLMNLAAEVVRRGVKVHWRSSAKKAEPQVLLEELEKLYDEATKIMVKARDADHGTEVYPGERLDVVELTLEDKVILDEIRSKVVPTMPYHHSLKSGGDRMAAAVELGDKIAASSEVKAESVIDYIIDLARDMKYLNIIHKKVDGAEYSLGRARVRGNVDNYLVLERRSKDYGKYDGLDVVKEPGDLMITLVSPFSRYLIHAYYDQYGNEKGIYVNVNTGVEVGEGNVRYIDLEVDIIHKDGEWSVIDEDGLDRLPAPLRELAVAEVEKLLSHPDRIKEVVANARELLSAQL</sequence>
<organism>
    <name type="scientific">Ignicoccus hospitalis (strain KIN4/I / DSM 18386 / JCM 14125)</name>
    <dbReference type="NCBI Taxonomy" id="453591"/>
    <lineage>
        <taxon>Archaea</taxon>
        <taxon>Thermoproteota</taxon>
        <taxon>Thermoprotei</taxon>
        <taxon>Desulfurococcales</taxon>
        <taxon>Desulfurococcaceae</taxon>
        <taxon>Ignicoccus</taxon>
    </lineage>
</organism>
<protein>
    <recommendedName>
        <fullName evidence="1">Probable ribonuclease FAU-1</fullName>
        <ecNumber evidence="1">3.1.26.-</ecNumber>
    </recommendedName>
    <alternativeName>
        <fullName evidence="1">RNA-binding protein FAU-1</fullName>
    </alternativeName>
</protein>
<name>FAU1_IGNH4</name>